<comment type="function">
    <text evidence="1">Monomeric heme protein which primary function is to store oxygen and facilitate its diffusion within muscle tissues. Reversibly binds oxygen through a pentacoordinated heme iron and enables its timely and efficient release as needed during periods of heightened demand. Depending on the oxidative conditions of tissues and cells, and in addition to its ability to bind oxygen, it also has a nitrite reductase activity whereby it regulates the production of bioactive nitric oxide. Under stress conditions, like hypoxia and anoxia, it also protects cells against reactive oxygen species thanks to its pseudoperoxidase activity.</text>
</comment>
<comment type="catalytic activity">
    <reaction evidence="1">
        <text>Fe(III)-heme b-[protein] + nitric oxide + H2O = Fe(II)-heme b-[protein] + nitrite + 2 H(+)</text>
        <dbReference type="Rhea" id="RHEA:77711"/>
        <dbReference type="Rhea" id="RHEA-COMP:18975"/>
        <dbReference type="Rhea" id="RHEA-COMP:18976"/>
        <dbReference type="ChEBI" id="CHEBI:15377"/>
        <dbReference type="ChEBI" id="CHEBI:15378"/>
        <dbReference type="ChEBI" id="CHEBI:16301"/>
        <dbReference type="ChEBI" id="CHEBI:16480"/>
        <dbReference type="ChEBI" id="CHEBI:55376"/>
        <dbReference type="ChEBI" id="CHEBI:60344"/>
    </reaction>
    <physiologicalReaction direction="right-to-left" evidence="1">
        <dbReference type="Rhea" id="RHEA:77713"/>
    </physiologicalReaction>
</comment>
<comment type="catalytic activity">
    <reaction evidence="1">
        <text>H2O2 + AH2 = A + 2 H2O</text>
        <dbReference type="Rhea" id="RHEA:30275"/>
        <dbReference type="ChEBI" id="CHEBI:13193"/>
        <dbReference type="ChEBI" id="CHEBI:15377"/>
        <dbReference type="ChEBI" id="CHEBI:16240"/>
        <dbReference type="ChEBI" id="CHEBI:17499"/>
    </reaction>
</comment>
<comment type="subunit">
    <text evidence="2">Monomeric.</text>
</comment>
<comment type="subcellular location">
    <subcellularLocation>
        <location evidence="1">Cytoplasm</location>
        <location evidence="1">Sarcoplasm</location>
    </subcellularLocation>
</comment>
<comment type="similarity">
    <text evidence="7">Belongs to the globin family.</text>
</comment>
<reference key="1">
    <citation type="journal article" date="2013" name="Science">
        <title>Evolution of mammalian diving capacity traced by myoglobin net surface charge.</title>
        <authorList>
            <person name="Mirceta S."/>
            <person name="Signore A.V."/>
            <person name="Burns J.M."/>
            <person name="Cossins A.R."/>
            <person name="Campbell K.L."/>
            <person name="Berenbrink M."/>
        </authorList>
    </citation>
    <scope>NUCLEOTIDE SEQUENCE [MRNA]</scope>
</reference>
<reference key="2">
    <citation type="submission" date="2017-01" db="EMBL/GenBank/DDBJ databases">
        <title>Cloning of the myoglobin gene from bowhead.</title>
        <authorList>
            <person name="Larsen K."/>
            <person name="Thomsen B."/>
            <person name="Magalhaes J.P."/>
        </authorList>
    </citation>
    <scope>NUCLEOTIDE SEQUENCE [MRNA]</scope>
    <source>
        <tissue>Muscle</tissue>
    </source>
</reference>
<reference key="3">
    <citation type="journal article" date="2018" name="Sci. Rep.">
        <title>Tracing whale myoglobin evolution by resurrecting ancient proteins.</title>
        <authorList>
            <person name="Isogai Y."/>
            <person name="Imamura H."/>
            <person name="Nakae S."/>
            <person name="Sumi T."/>
            <person name="Takahashi K.I."/>
            <person name="Nakagawa T."/>
            <person name="Tsuneshige A."/>
            <person name="Shirai T."/>
        </authorList>
    </citation>
    <scope>X-RAY CRYSTALLOGRAPHY (1.58 ANGSTROMS) IN COMPLEX WITH HEME</scope>
</reference>
<accession>R9RZK8</accession>
<gene>
    <name evidence="9" type="primary">MB</name>
</gene>
<name>MYG_BALMY</name>
<sequence length="154" mass="17207">MVLSDGEWQLVLNIWAKVEADVAGHGQDVLIRLFKGHPETLEKFDKFKHLKTEAEMKASEDLKKHGNTVLTALGGILKKKGHHEAELKPLAQSHATKHKIPIKYLEFISDAIIHVLHSRHPGDFGADAQGAMNKALELFRKDIAAKYKELGFQG</sequence>
<dbReference type="EC" id="1.7.-.-" evidence="1"/>
<dbReference type="EC" id="1.11.1.-" evidence="1"/>
<dbReference type="EMBL" id="KC524747">
    <property type="protein sequence ID" value="AGM75750.1"/>
    <property type="molecule type" value="mRNA"/>
</dbReference>
<dbReference type="EMBL" id="KY471142">
    <property type="protein sequence ID" value="AUF74482.1"/>
    <property type="molecule type" value="mRNA"/>
</dbReference>
<dbReference type="PDB" id="5YCI">
    <property type="method" value="X-ray"/>
    <property type="resolution" value="1.97 A"/>
    <property type="chains" value="A/B=1-154"/>
</dbReference>
<dbReference type="PDB" id="5YCJ">
    <property type="method" value="X-ray"/>
    <property type="resolution" value="1.58 A"/>
    <property type="chains" value="A/B=1-154"/>
</dbReference>
<dbReference type="PDBsum" id="5YCI"/>
<dbReference type="PDBsum" id="5YCJ"/>
<dbReference type="SMR" id="R9RZK8"/>
<dbReference type="GO" id="GO:0070062">
    <property type="term" value="C:extracellular exosome"/>
    <property type="evidence" value="ECO:0007669"/>
    <property type="project" value="TreeGrafter"/>
</dbReference>
<dbReference type="GO" id="GO:0016528">
    <property type="term" value="C:sarcoplasm"/>
    <property type="evidence" value="ECO:0000250"/>
    <property type="project" value="UniProtKB"/>
</dbReference>
<dbReference type="GO" id="GO:0020037">
    <property type="term" value="F:heme binding"/>
    <property type="evidence" value="ECO:0007669"/>
    <property type="project" value="InterPro"/>
</dbReference>
<dbReference type="GO" id="GO:0046872">
    <property type="term" value="F:metal ion binding"/>
    <property type="evidence" value="ECO:0007669"/>
    <property type="project" value="UniProtKB-KW"/>
</dbReference>
<dbReference type="GO" id="GO:0098809">
    <property type="term" value="F:nitrite reductase activity"/>
    <property type="evidence" value="ECO:0000250"/>
    <property type="project" value="UniProtKB"/>
</dbReference>
<dbReference type="GO" id="GO:0019825">
    <property type="term" value="F:oxygen binding"/>
    <property type="evidence" value="ECO:0007669"/>
    <property type="project" value="InterPro"/>
</dbReference>
<dbReference type="GO" id="GO:0005344">
    <property type="term" value="F:oxygen carrier activity"/>
    <property type="evidence" value="ECO:0000250"/>
    <property type="project" value="UniProtKB"/>
</dbReference>
<dbReference type="GO" id="GO:0004601">
    <property type="term" value="F:peroxidase activity"/>
    <property type="evidence" value="ECO:0000250"/>
    <property type="project" value="UniProtKB"/>
</dbReference>
<dbReference type="GO" id="GO:0019430">
    <property type="term" value="P:removal of superoxide radicals"/>
    <property type="evidence" value="ECO:0000250"/>
    <property type="project" value="UniProtKB"/>
</dbReference>
<dbReference type="CDD" id="cd08926">
    <property type="entry name" value="Mb"/>
    <property type="match status" value="1"/>
</dbReference>
<dbReference type="Gene3D" id="6.10.140.2100">
    <property type="match status" value="1"/>
</dbReference>
<dbReference type="Gene3D" id="6.10.140.2110">
    <property type="match status" value="1"/>
</dbReference>
<dbReference type="InterPro" id="IPR000971">
    <property type="entry name" value="Globin"/>
</dbReference>
<dbReference type="InterPro" id="IPR009050">
    <property type="entry name" value="Globin-like_sf"/>
</dbReference>
<dbReference type="InterPro" id="IPR002335">
    <property type="entry name" value="Myoglobin"/>
</dbReference>
<dbReference type="PANTHER" id="PTHR47132">
    <property type="entry name" value="MYOGLOBIN"/>
    <property type="match status" value="1"/>
</dbReference>
<dbReference type="PANTHER" id="PTHR47132:SF1">
    <property type="entry name" value="MYOGLOBIN"/>
    <property type="match status" value="1"/>
</dbReference>
<dbReference type="Pfam" id="PF00042">
    <property type="entry name" value="Globin"/>
    <property type="match status" value="1"/>
</dbReference>
<dbReference type="PRINTS" id="PR00613">
    <property type="entry name" value="MYOGLOBIN"/>
</dbReference>
<dbReference type="SUPFAM" id="SSF46458">
    <property type="entry name" value="Globin-like"/>
    <property type="match status" value="1"/>
</dbReference>
<dbReference type="PROSITE" id="PS01033">
    <property type="entry name" value="GLOBIN"/>
    <property type="match status" value="1"/>
</dbReference>
<keyword id="KW-0002">3D-structure</keyword>
<keyword id="KW-0963">Cytoplasm</keyword>
<keyword id="KW-0349">Heme</keyword>
<keyword id="KW-0408">Iron</keyword>
<keyword id="KW-0479">Metal-binding</keyword>
<keyword id="KW-0514">Muscle protein</keyword>
<keyword id="KW-0560">Oxidoreductase</keyword>
<keyword id="KW-0561">Oxygen transport</keyword>
<keyword id="KW-0597">Phosphoprotein</keyword>
<keyword id="KW-0813">Transport</keyword>
<protein>
    <recommendedName>
        <fullName evidence="9">Myoglobin</fullName>
    </recommendedName>
    <alternativeName>
        <fullName>Nitrite reductase MB</fullName>
        <ecNumber evidence="1">1.7.-.-</ecNumber>
    </alternativeName>
    <alternativeName>
        <fullName>Pseudoperoxidase MB</fullName>
        <ecNumber evidence="1">1.11.1.-</ecNumber>
    </alternativeName>
</protein>
<organism>
    <name type="scientific">Balaena mysticetus</name>
    <name type="common">Bowhead whale</name>
    <dbReference type="NCBI Taxonomy" id="27602"/>
    <lineage>
        <taxon>Eukaryota</taxon>
        <taxon>Metazoa</taxon>
        <taxon>Chordata</taxon>
        <taxon>Craniata</taxon>
        <taxon>Vertebrata</taxon>
        <taxon>Euteleostomi</taxon>
        <taxon>Mammalia</taxon>
        <taxon>Eutheria</taxon>
        <taxon>Laurasiatheria</taxon>
        <taxon>Artiodactyla</taxon>
        <taxon>Whippomorpha</taxon>
        <taxon>Cetacea</taxon>
        <taxon>Mysticeti</taxon>
        <taxon>Balaenidae</taxon>
        <taxon>Balaena</taxon>
    </lineage>
</organism>
<evidence type="ECO:0000250" key="1">
    <source>
        <dbReference type="UniProtKB" id="P02144"/>
    </source>
</evidence>
<evidence type="ECO:0000250" key="2">
    <source>
        <dbReference type="UniProtKB" id="P02185"/>
    </source>
</evidence>
<evidence type="ECO:0000250" key="3">
    <source>
        <dbReference type="UniProtKB" id="P02189"/>
    </source>
</evidence>
<evidence type="ECO:0000250" key="4">
    <source>
        <dbReference type="UniProtKB" id="P04247"/>
    </source>
</evidence>
<evidence type="ECO:0000250" key="5">
    <source>
        <dbReference type="UniProtKB" id="P68082"/>
    </source>
</evidence>
<evidence type="ECO:0000250" key="6">
    <source>
        <dbReference type="UniProtKB" id="Q9QZ76"/>
    </source>
</evidence>
<evidence type="ECO:0000255" key="7">
    <source>
        <dbReference type="PROSITE-ProRule" id="PRU00238"/>
    </source>
</evidence>
<evidence type="ECO:0000269" key="8">
    <source>
    </source>
</evidence>
<evidence type="ECO:0000303" key="9">
    <source>
    </source>
</evidence>
<evidence type="ECO:0007744" key="10">
    <source>
        <dbReference type="PDB" id="5YCI"/>
    </source>
</evidence>
<evidence type="ECO:0007829" key="11">
    <source>
        <dbReference type="PDB" id="5YCI"/>
    </source>
</evidence>
<evidence type="ECO:0007829" key="12">
    <source>
        <dbReference type="PDB" id="5YCJ"/>
    </source>
</evidence>
<feature type="initiator methionine" description="Removed" evidence="2">
    <location>
        <position position="1"/>
    </location>
</feature>
<feature type="chain" id="PRO_0000450813" description="Myoglobin">
    <location>
        <begin position="2"/>
        <end position="154"/>
    </location>
</feature>
<feature type="domain" description="Globin" evidence="7">
    <location>
        <begin position="2"/>
        <end position="148"/>
    </location>
</feature>
<feature type="binding site" evidence="5">
    <location>
        <position position="65"/>
    </location>
    <ligand>
        <name>nitrite</name>
        <dbReference type="ChEBI" id="CHEBI:16301"/>
    </ligand>
</feature>
<feature type="binding site" evidence="3 7">
    <location>
        <position position="65"/>
    </location>
    <ligand>
        <name>O2</name>
        <dbReference type="ChEBI" id="CHEBI:15379"/>
    </ligand>
</feature>
<feature type="binding site" description="proximal binding residue" evidence="8 10">
    <location>
        <position position="94"/>
    </location>
    <ligand>
        <name>heme b</name>
        <dbReference type="ChEBI" id="CHEBI:60344"/>
    </ligand>
    <ligandPart>
        <name>Fe</name>
        <dbReference type="ChEBI" id="CHEBI:18248"/>
    </ligandPart>
</feature>
<feature type="modified residue" description="Phosphoserine" evidence="6">
    <location>
        <position position="4"/>
    </location>
</feature>
<feature type="modified residue" description="Phosphothreonine" evidence="4">
    <location>
        <position position="68"/>
    </location>
</feature>
<feature type="helix" evidence="12">
    <location>
        <begin position="5"/>
        <end position="18"/>
    </location>
</feature>
<feature type="helix" evidence="11">
    <location>
        <begin position="19"/>
        <end position="21"/>
    </location>
</feature>
<feature type="helix" evidence="12">
    <location>
        <begin position="22"/>
        <end position="36"/>
    </location>
</feature>
<feature type="helix" evidence="12">
    <location>
        <begin position="38"/>
        <end position="41"/>
    </location>
</feature>
<feature type="helix" evidence="12">
    <location>
        <begin position="45"/>
        <end position="47"/>
    </location>
</feature>
<feature type="helix" evidence="12">
    <location>
        <begin position="53"/>
        <end position="57"/>
    </location>
</feature>
<feature type="helix" evidence="12">
    <location>
        <begin position="60"/>
        <end position="78"/>
    </location>
</feature>
<feature type="turn" evidence="12">
    <location>
        <begin position="79"/>
        <end position="81"/>
    </location>
</feature>
<feature type="helix" evidence="12">
    <location>
        <begin position="84"/>
        <end position="96"/>
    </location>
</feature>
<feature type="helix" evidence="12">
    <location>
        <begin position="103"/>
        <end position="119"/>
    </location>
</feature>
<feature type="turn" evidence="12">
    <location>
        <begin position="121"/>
        <end position="123"/>
    </location>
</feature>
<feature type="helix" evidence="12">
    <location>
        <begin position="126"/>
        <end position="149"/>
    </location>
</feature>
<proteinExistence type="evidence at protein level"/>